<sequence length="1210" mass="130723">MASQLQVFSPPSVSSSAFCSAKKLKIEPSGWDVSGQSSNDKYYTHSKTLPATQGQASSSHQVANFNLPAYDQGLLLPAPAVEHIVVTAADSSGSAATATFQSSQTLTHRSNVSLLEPYQKCGLKRKSEEVESNGSVQIIEEHPPLMLQNRTVVGAAATTTTVTTKSSSSSGEGDYQLVQHEILCSMTNSYEVLEFLGRGTFGQVAKCWKRSTKEIVAIKILKNHPSYARQGQIEVSILSRLSSENADEYNFVRSYECFQHKNHTCLVFEMLEQNLYDFLKQNKFSPLPLKYIRPILQQVATALMKLKSLGLIHADLKPENIMLVDPVRQPYRVKVIDFGSASHVSKAVCSTYLQSRYYRAPEIILGLPFCEAIDMWSLGCVIAELFLGWPLYPGASEYDQIRYISQTQGLPAEYLLSAGTKTTRFFNRDPNLGYPLWRLKTPEEHELETGIKSKEARKYIFNCLDDMAQVNMSTDLEGTDMLAEKADRREYIDLLKKMLTIDADKRITPLKTLNHQFVTMSHLLDFPHSSHVKSCFQNMEICKRRVHMYDTVSQIKSPFTTHVAPNTSTNLTMSFSNQLNTVHNQASVLASSSTAAAATLSLANSDVSLLNYQSALYPSSAAPVPGVAQQGVSLQPGTTQICTQTDPFQQTFIVCPPAFQTGLQATTKHSGFPVRMDNAVPIVPQAPAAQPLQIQSGVLTQGSCTPLMVATLHPQVATITPQYAVPFTLSCAAGRPALVEQTAAVLQAWPGGTQQILLPSAWQQLPGVALHNSVQPAAVIPEAMGSSQQLADWRNAHSHGNQYSTIMQQPSLLTNHVTLATAQPLNVGVAHVVRQQQSSSLPSKKNKQSAPVSSKSSLEVLPSQVYSLVGSSPLRTTSSYNSLVPVQDQHQPIIIPDTPSPPVSVITIRSDTDEEEDNKYKPNSSSLKARSNVISYVTVNDSPDSDSSLSSPHPTDTLSALRGNSGTLLEGPGRPAADGIGTRTIIVPPLKTQLGDCTVATQASGLLSSKTKPVASVSGQSSGCCITPTGYRAQRGGASAVQPLNLSQNQQSSSASTSQERSSNPAPRRQQAFVAPLSQAPYAFQHGSPLHSTGHPHLAPAPAHLPSQPHLYTYAAPTSAAALGSTSSIAHLFSPQGSSRHAAAYTTHPSTLVHQVPVSVGPSLLTSASVAPAQYQHQFATQSYIGSSRGSTIYTGYPLSPTKISQYSYL</sequence>
<proteinExistence type="evidence at protein level"/>
<keyword id="KW-0025">Alternative splicing</keyword>
<keyword id="KW-0067">ATP-binding</keyword>
<keyword id="KW-0963">Cytoplasm</keyword>
<keyword id="KW-1017">Isopeptide bond</keyword>
<keyword id="KW-0418">Kinase</keyword>
<keyword id="KW-0547">Nucleotide-binding</keyword>
<keyword id="KW-0539">Nucleus</keyword>
<keyword id="KW-0597">Phosphoprotein</keyword>
<keyword id="KW-1185">Reference proteome</keyword>
<keyword id="KW-0723">Serine/threonine-protein kinase</keyword>
<keyword id="KW-0804">Transcription</keyword>
<keyword id="KW-0805">Transcription regulation</keyword>
<keyword id="KW-0808">Transferase</keyword>
<keyword id="KW-0832">Ubl conjugation</keyword>
<reference key="1">
    <citation type="journal article" date="1998" name="J. Biol. Chem.">
        <title>Homeodomain-interacting protein kinases, a novel family of co-repressors for homeodomain transcription factors.</title>
        <authorList>
            <person name="Kim Y.H."/>
            <person name="Choi C.Y."/>
            <person name="Lee S.-J."/>
            <person name="Conti M.A."/>
            <person name="Kim Y."/>
        </authorList>
    </citation>
    <scope>NUCLEOTIDE SEQUENCE [MRNA] (ISOFORM 1)</scope>
    <scope>INTERACTION WITH NKX1-2 AND NKX2-5</scope>
    <source>
        <strain>BALB/cJ</strain>
    </source>
</reference>
<reference key="2">
    <citation type="journal article" date="2000" name="Mol. Reprod. Dev.">
        <title>Murine Myak, a member of a family of yeast YAK1-related genes, is highly expressed in hormonally modulated epithelia in the reproductive system and in the embryonic central nervous system.</title>
        <authorList>
            <person name="Shang E."/>
            <person name="Wang X."/>
            <person name="Huang J."/>
            <person name="Yoshida W."/>
            <person name="Kuroiwa A."/>
            <person name="Wolgemuth D.J."/>
        </authorList>
    </citation>
    <scope>NUCLEOTIDE SEQUENCE [MRNA] (ISOFORMS 1 AND 3)</scope>
    <scope>TISSUE SPECIFICITY</scope>
    <scope>DEVELOPMENTAL STAGE</scope>
    <source>
        <strain>CD-1</strain>
        <tissue>Testis</tissue>
    </source>
</reference>
<reference key="3">
    <citation type="submission" date="1999-07" db="EMBL/GenBank/DDBJ databases">
        <title>Protein kinases associated with PML/CBP nuclear bodies and filamentous threads regulate transcription and inhibit cell growth.</title>
        <authorList>
            <person name="Sather S.L."/>
            <person name="Johnson N.L."/>
            <person name="Johnson G.L."/>
        </authorList>
    </citation>
    <scope>NUCLEOTIDE SEQUENCE [MRNA] (ISOFORMS 1 AND 2)</scope>
</reference>
<reference key="4">
    <citation type="journal article" date="2004" name="Genome Res.">
        <title>The status, quality, and expansion of the NIH full-length cDNA project: the Mammalian Gene Collection (MGC).</title>
        <authorList>
            <consortium name="The MGC Project Team"/>
        </authorList>
    </citation>
    <scope>NUCLEOTIDE SEQUENCE [LARGE SCALE MRNA] (ISOFORM 1)</scope>
    <source>
        <tissue>Brain</tissue>
    </source>
</reference>
<reference key="5">
    <citation type="journal article" date="2003" name="DNA Res.">
        <title>Prediction of the coding sequences of mouse homologues of KIAA gene: II. The complete nucleotide sequences of 400 mouse KIAA-homologous cDNAs identified by screening of terminal sequences of cDNA clones randomly sampled from size-fractionated libraries.</title>
        <authorList>
            <person name="Okazaki N."/>
            <person name="Kikuno R."/>
            <person name="Ohara R."/>
            <person name="Inamoto S."/>
            <person name="Aizawa H."/>
            <person name="Yuasa S."/>
            <person name="Nakajima D."/>
            <person name="Nagase T."/>
            <person name="Ohara O."/>
            <person name="Koga H."/>
        </authorList>
    </citation>
    <scope>NUCLEOTIDE SEQUENCE [LARGE SCALE MRNA] OF 608-1209 (ISOFORM 1)</scope>
    <source>
        <tissue>Brain</tissue>
    </source>
</reference>
<reference key="6">
    <citation type="journal article" date="2003" name="Mol. Cell. Biol.">
        <title>Homeodomain-interacting protein kinase 1 modulates Daxx localization, phosphorylation, and transcriptional activity.</title>
        <authorList>
            <person name="Ecsedy J.A."/>
            <person name="Michaelson J.S."/>
            <person name="Leder P."/>
        </authorList>
    </citation>
    <scope>TISSUE SPECIFICITY</scope>
    <scope>SUBCELLULAR LOCATION</scope>
    <scope>INTERACTION WITH DAXX</scope>
    <scope>AUTOPHOSPHORYLATION</scope>
    <scope>MUTAGENESIS OF LYS-219</scope>
</reference>
<reference key="7">
    <citation type="journal article" date="2003" name="Proc. Natl. Acad. Sci. U.S.A.">
        <title>Characterization of cells and gene-targeted mice deficient for the p53-binding kinase homeodomain-interacting protein kinase 1 (HIPK1).</title>
        <authorList>
            <person name="Kondo S."/>
            <person name="Lu Y."/>
            <person name="Debbas M."/>
            <person name="Lin A.W."/>
            <person name="Sarosi I."/>
            <person name="Itie A."/>
            <person name="Wakeham A."/>
            <person name="Tuan J."/>
            <person name="Saris C."/>
            <person name="Elliott G."/>
            <person name="Ma W."/>
            <person name="Benchimol S."/>
            <person name="Lowe S.W."/>
            <person name="Mak T.W."/>
            <person name="Thukral S.K."/>
        </authorList>
    </citation>
    <scope>INTERACTION WITH TP53</scope>
    <scope>AUTOPHOSPHORYLATION</scope>
    <scope>FUNCTION</scope>
</reference>
<reference key="8">
    <citation type="journal article" date="2006" name="EMBO J.">
        <title>Roles of HIPK1 and HIPK2 in AML1- and p300-dependent transcription, hematopoiesis and blood vessel formation.</title>
        <authorList>
            <person name="Aikawa Y."/>
            <person name="Nguyen L.A."/>
            <person name="Isono K."/>
            <person name="Takakura N."/>
            <person name="Tagata Y."/>
            <person name="Schmitz M.L."/>
            <person name="Koseki H."/>
            <person name="Kitabayashi I."/>
        </authorList>
    </citation>
    <scope>FUNCTION IN ANGIOGENESIS</scope>
</reference>
<reference key="9">
    <citation type="journal article" date="2008" name="Cell Death Differ.">
        <title>SENP1 mediates TNF-induced desumoylation and cytoplasmic translocation of HIPK1 to enhance ASK1-dependent apoptosis.</title>
        <authorList>
            <person name="Li X."/>
            <person name="Luo Y."/>
            <person name="Yu L."/>
            <person name="Lin Y."/>
            <person name="Luo D."/>
            <person name="Zhang H."/>
            <person name="He Y."/>
            <person name="Kim Y.-O."/>
            <person name="Kim Y."/>
            <person name="Tang S."/>
            <person name="Min W."/>
        </authorList>
    </citation>
    <scope>DESUMOYLATION BY SENP1</scope>
    <scope>SUBCELLULAR LOCATION</scope>
</reference>
<reference key="10">
    <citation type="journal article" date="2010" name="Blood">
        <title>Homeodomain-interacting protein kinase 2 plays an important role in normal terminal erythroid differentiation.</title>
        <authorList>
            <person name="Hattangadi S.M."/>
            <person name="Burke K.A."/>
            <person name="Lodish H.F."/>
        </authorList>
    </citation>
    <scope>FUNCTION</scope>
    <scope>DEVELOPMENTAL STAGE</scope>
</reference>
<reference key="11">
    <citation type="journal article" date="2010" name="FEBS Lett.">
        <title>Involvement of the Hipk family in regulation of eyeball size, lens formation and retinal morphogenesis.</title>
        <authorList>
            <person name="Inoue T."/>
            <person name="Kagawa T."/>
            <person name="Inoue-Mochita M."/>
            <person name="Isono K."/>
            <person name="Ohtsu N."/>
            <person name="Nobuhisa I."/>
            <person name="Fukushima M."/>
            <person name="Tanihara H."/>
            <person name="Taga T."/>
        </authorList>
    </citation>
    <scope>FUNCTION IN EYE DEVELOPMENT</scope>
    <scope>DEVELOPMENTAL STAGE</scope>
    <scope>SUBCELLULAR LOCATION</scope>
    <scope>DISRUPTION PHENOTYPE</scope>
</reference>
<evidence type="ECO:0000250" key="1"/>
<evidence type="ECO:0000250" key="2">
    <source>
        <dbReference type="UniProtKB" id="Q86Z02"/>
    </source>
</evidence>
<evidence type="ECO:0000255" key="3">
    <source>
        <dbReference type="PROSITE-ProRule" id="PRU00159"/>
    </source>
</evidence>
<evidence type="ECO:0000256" key="4">
    <source>
        <dbReference type="SAM" id="MobiDB-lite"/>
    </source>
</evidence>
<evidence type="ECO:0000269" key="5">
    <source>
    </source>
</evidence>
<evidence type="ECO:0000269" key="6">
    <source>
    </source>
</evidence>
<evidence type="ECO:0000269" key="7">
    <source>
    </source>
</evidence>
<evidence type="ECO:0000269" key="8">
    <source>
    </source>
</evidence>
<evidence type="ECO:0000269" key="9">
    <source>
    </source>
</evidence>
<evidence type="ECO:0000269" key="10">
    <source>
    </source>
</evidence>
<evidence type="ECO:0000269" key="11">
    <source>
    </source>
</evidence>
<evidence type="ECO:0000269" key="12">
    <source>
    </source>
</evidence>
<evidence type="ECO:0000303" key="13">
    <source>
    </source>
</evidence>
<evidence type="ECO:0000303" key="14">
    <source ref="3"/>
</evidence>
<evidence type="ECO:0000305" key="15"/>
<organism>
    <name type="scientific">Mus musculus</name>
    <name type="common">Mouse</name>
    <dbReference type="NCBI Taxonomy" id="10090"/>
    <lineage>
        <taxon>Eukaryota</taxon>
        <taxon>Metazoa</taxon>
        <taxon>Chordata</taxon>
        <taxon>Craniata</taxon>
        <taxon>Vertebrata</taxon>
        <taxon>Euteleostomi</taxon>
        <taxon>Mammalia</taxon>
        <taxon>Eutheria</taxon>
        <taxon>Euarchontoglires</taxon>
        <taxon>Glires</taxon>
        <taxon>Rodentia</taxon>
        <taxon>Myomorpha</taxon>
        <taxon>Muroidea</taxon>
        <taxon>Muridae</taxon>
        <taxon>Murinae</taxon>
        <taxon>Mus</taxon>
        <taxon>Mus</taxon>
    </lineage>
</organism>
<gene>
    <name type="primary">Hipk1</name>
    <name type="synonym">Kiaa0630</name>
    <name type="synonym">Myak</name>
    <name type="synonym">Nbak2</name>
</gene>
<dbReference type="EC" id="2.7.11.1"/>
<dbReference type="EMBL" id="AF077658">
    <property type="protein sequence ID" value="AAC63010.1"/>
    <property type="molecule type" value="mRNA"/>
</dbReference>
<dbReference type="EMBL" id="AF071070">
    <property type="protein sequence ID" value="AAD41592.1"/>
    <property type="molecule type" value="mRNA"/>
</dbReference>
<dbReference type="EMBL" id="AF071071">
    <property type="protein sequence ID" value="AAD41593.1"/>
    <property type="molecule type" value="mRNA"/>
</dbReference>
<dbReference type="EMBL" id="AF170303">
    <property type="protein sequence ID" value="AAD52568.1"/>
    <property type="molecule type" value="mRNA"/>
</dbReference>
<dbReference type="EMBL" id="AF170304">
    <property type="protein sequence ID" value="AAD52569.1"/>
    <property type="molecule type" value="mRNA"/>
</dbReference>
<dbReference type="EMBL" id="BC145697">
    <property type="protein sequence ID" value="AAI45698.1"/>
    <property type="molecule type" value="mRNA"/>
</dbReference>
<dbReference type="EMBL" id="BC145699">
    <property type="protein sequence ID" value="AAI45700.1"/>
    <property type="molecule type" value="mRNA"/>
</dbReference>
<dbReference type="EMBL" id="AK122333">
    <property type="protein sequence ID" value="BAC65615.1"/>
    <property type="molecule type" value="mRNA"/>
</dbReference>
<dbReference type="CCDS" id="CCDS38576.1">
    <molecule id="O88904-1"/>
</dbReference>
<dbReference type="CCDS" id="CCDS79992.1">
    <molecule id="O88904-2"/>
</dbReference>
<dbReference type="PIR" id="T14357">
    <property type="entry name" value="T14357"/>
</dbReference>
<dbReference type="RefSeq" id="NP_001288233.1">
    <molecule id="O88904-1"/>
    <property type="nucleotide sequence ID" value="NM_001301304.1"/>
</dbReference>
<dbReference type="RefSeq" id="NP_001288235.1">
    <molecule id="O88904-2"/>
    <property type="nucleotide sequence ID" value="NM_001301306.1"/>
</dbReference>
<dbReference type="RefSeq" id="NP_034562.2">
    <molecule id="O88904-1"/>
    <property type="nucleotide sequence ID" value="NM_010432.2"/>
</dbReference>
<dbReference type="RefSeq" id="XP_036018798.1">
    <molecule id="O88904-1"/>
    <property type="nucleotide sequence ID" value="XM_036162905.1"/>
</dbReference>
<dbReference type="SMR" id="O88904"/>
<dbReference type="BioGRID" id="200306">
    <property type="interactions" value="2"/>
</dbReference>
<dbReference type="FunCoup" id="O88904">
    <property type="interactions" value="4002"/>
</dbReference>
<dbReference type="IntAct" id="O88904">
    <property type="interactions" value="5"/>
</dbReference>
<dbReference type="MINT" id="O88904"/>
<dbReference type="STRING" id="10090.ENSMUSP00000113998"/>
<dbReference type="GlyGen" id="O88904">
    <property type="glycosylation" value="4 sites, 1 N-linked glycan (1 site), 1 O-linked glycan (3 sites)"/>
</dbReference>
<dbReference type="iPTMnet" id="O88904"/>
<dbReference type="PhosphoSitePlus" id="O88904"/>
<dbReference type="jPOST" id="O88904"/>
<dbReference type="PaxDb" id="10090-ENSMUSP00000029438"/>
<dbReference type="ProteomicsDB" id="273113">
    <molecule id="O88904-1"/>
</dbReference>
<dbReference type="ProteomicsDB" id="273114">
    <molecule id="O88904-2"/>
</dbReference>
<dbReference type="ProteomicsDB" id="273115">
    <molecule id="O88904-3"/>
</dbReference>
<dbReference type="Antibodypedia" id="20149">
    <property type="antibodies" value="344 antibodies from 30 providers"/>
</dbReference>
<dbReference type="DNASU" id="15257"/>
<dbReference type="Ensembl" id="ENSMUST00000029438.15">
    <molecule id="O88904-1"/>
    <property type="protein sequence ID" value="ENSMUSP00000029438.9"/>
    <property type="gene ID" value="ENSMUSG00000008730.18"/>
</dbReference>
<dbReference type="Ensembl" id="ENSMUST00000106845.9">
    <molecule id="O88904-2"/>
    <property type="protein sequence ID" value="ENSMUSP00000102458.3"/>
    <property type="gene ID" value="ENSMUSG00000008730.18"/>
</dbReference>
<dbReference type="Ensembl" id="ENSMUST00000118317.8">
    <molecule id="O88904-1"/>
    <property type="protein sequence ID" value="ENSMUSP00000113998.2"/>
    <property type="gene ID" value="ENSMUSG00000008730.18"/>
</dbReference>
<dbReference type="GeneID" id="15257"/>
<dbReference type="KEGG" id="mmu:15257"/>
<dbReference type="UCSC" id="uc008qtg.2">
    <molecule id="O88904-1"/>
    <property type="organism name" value="mouse"/>
</dbReference>
<dbReference type="UCSC" id="uc012cve.1">
    <molecule id="O88904-2"/>
    <property type="organism name" value="mouse"/>
</dbReference>
<dbReference type="AGR" id="MGI:1314873"/>
<dbReference type="CTD" id="204851"/>
<dbReference type="MGI" id="MGI:1314873">
    <property type="gene designation" value="Hipk1"/>
</dbReference>
<dbReference type="VEuPathDB" id="HostDB:ENSMUSG00000008730"/>
<dbReference type="eggNOG" id="KOG0667">
    <property type="taxonomic scope" value="Eukaryota"/>
</dbReference>
<dbReference type="GeneTree" id="ENSGT00940000155356"/>
<dbReference type="HOGENOM" id="CLU_003045_1_0_1"/>
<dbReference type="InParanoid" id="O88904"/>
<dbReference type="OMA" id="QVNAHSH"/>
<dbReference type="OrthoDB" id="9332038at2759"/>
<dbReference type="PhylomeDB" id="O88904"/>
<dbReference type="TreeFam" id="TF105417"/>
<dbReference type="Reactome" id="R-MMU-6804756">
    <property type="pathway name" value="Regulation of TP53 Activity through Phosphorylation"/>
</dbReference>
<dbReference type="BioGRID-ORCS" id="15257">
    <property type="hits" value="6 hits in 82 CRISPR screens"/>
</dbReference>
<dbReference type="ChiTaRS" id="Hipk1">
    <property type="organism name" value="mouse"/>
</dbReference>
<dbReference type="PRO" id="PR:O88904"/>
<dbReference type="Proteomes" id="UP000000589">
    <property type="component" value="Chromosome 3"/>
</dbReference>
<dbReference type="RNAct" id="O88904">
    <property type="molecule type" value="protein"/>
</dbReference>
<dbReference type="Bgee" id="ENSMUSG00000008730">
    <property type="expression patterns" value="Expressed in vestibular membrane of cochlear duct and 241 other cell types or tissues"/>
</dbReference>
<dbReference type="ExpressionAtlas" id="O88904">
    <property type="expression patterns" value="baseline and differential"/>
</dbReference>
<dbReference type="GO" id="GO:0005813">
    <property type="term" value="C:centrosome"/>
    <property type="evidence" value="ECO:0007669"/>
    <property type="project" value="Ensembl"/>
</dbReference>
<dbReference type="GO" id="GO:0036064">
    <property type="term" value="C:ciliary basal body"/>
    <property type="evidence" value="ECO:0007669"/>
    <property type="project" value="Ensembl"/>
</dbReference>
<dbReference type="GO" id="GO:0005737">
    <property type="term" value="C:cytoplasm"/>
    <property type="evidence" value="ECO:0000314"/>
    <property type="project" value="DFLAT"/>
</dbReference>
<dbReference type="GO" id="GO:0005829">
    <property type="term" value="C:cytosol"/>
    <property type="evidence" value="ECO:0007669"/>
    <property type="project" value="Ensembl"/>
</dbReference>
<dbReference type="GO" id="GO:0016607">
    <property type="term" value="C:nuclear speck"/>
    <property type="evidence" value="ECO:0000314"/>
    <property type="project" value="MGI"/>
</dbReference>
<dbReference type="GO" id="GO:0005634">
    <property type="term" value="C:nucleus"/>
    <property type="evidence" value="ECO:0000250"/>
    <property type="project" value="UniProtKB"/>
</dbReference>
<dbReference type="GO" id="GO:0016605">
    <property type="term" value="C:PML body"/>
    <property type="evidence" value="ECO:0000314"/>
    <property type="project" value="MGI"/>
</dbReference>
<dbReference type="GO" id="GO:0005524">
    <property type="term" value="F:ATP binding"/>
    <property type="evidence" value="ECO:0007669"/>
    <property type="project" value="UniProtKB-KW"/>
</dbReference>
<dbReference type="GO" id="GO:0004672">
    <property type="term" value="F:protein kinase activity"/>
    <property type="evidence" value="ECO:0000250"/>
    <property type="project" value="UniProtKB"/>
</dbReference>
<dbReference type="GO" id="GO:0106310">
    <property type="term" value="F:protein serine kinase activity"/>
    <property type="evidence" value="ECO:0007669"/>
    <property type="project" value="RHEA"/>
</dbReference>
<dbReference type="GO" id="GO:0004674">
    <property type="term" value="F:protein serine/threonine kinase activity"/>
    <property type="evidence" value="ECO:0007669"/>
    <property type="project" value="UniProtKB-KW"/>
</dbReference>
<dbReference type="GO" id="GO:0003714">
    <property type="term" value="F:transcription corepressor activity"/>
    <property type="evidence" value="ECO:0000250"/>
    <property type="project" value="UniProtKB"/>
</dbReference>
<dbReference type="GO" id="GO:0034333">
    <property type="term" value="P:adherens junction assembly"/>
    <property type="evidence" value="ECO:0000315"/>
    <property type="project" value="CACAO"/>
</dbReference>
<dbReference type="GO" id="GO:0009952">
    <property type="term" value="P:anterior/posterior pattern specification"/>
    <property type="evidence" value="ECO:0000316"/>
    <property type="project" value="MGI"/>
</dbReference>
<dbReference type="GO" id="GO:0008283">
    <property type="term" value="P:cell population proliferation"/>
    <property type="evidence" value="ECO:0000316"/>
    <property type="project" value="MGI"/>
</dbReference>
<dbReference type="GO" id="GO:0048596">
    <property type="term" value="P:embryonic camera-type eye morphogenesis"/>
    <property type="evidence" value="ECO:0000315"/>
    <property type="project" value="DFLAT"/>
</dbReference>
<dbReference type="GO" id="GO:0060059">
    <property type="term" value="P:embryonic retina morphogenesis in camera-type eye"/>
    <property type="evidence" value="ECO:0000315"/>
    <property type="project" value="DFLAT"/>
</dbReference>
<dbReference type="GO" id="GO:0072577">
    <property type="term" value="P:endothelial cell apoptotic process"/>
    <property type="evidence" value="ECO:0007669"/>
    <property type="project" value="Ensembl"/>
</dbReference>
<dbReference type="GO" id="GO:0097191">
    <property type="term" value="P:extrinsic apoptotic signaling pathway"/>
    <property type="evidence" value="ECO:0007669"/>
    <property type="project" value="Ensembl"/>
</dbReference>
<dbReference type="GO" id="GO:0042771">
    <property type="term" value="P:intrinsic apoptotic signaling pathway in response to DNA damage by p53 class mediator"/>
    <property type="evidence" value="ECO:0000316"/>
    <property type="project" value="MGI"/>
</dbReference>
<dbReference type="GO" id="GO:0061072">
    <property type="term" value="P:iris morphogenesis"/>
    <property type="evidence" value="ECO:0000315"/>
    <property type="project" value="DFLAT"/>
</dbReference>
<dbReference type="GO" id="GO:0060235">
    <property type="term" value="P:lens induction in camera-type eye"/>
    <property type="evidence" value="ECO:0000315"/>
    <property type="project" value="DFLAT"/>
</dbReference>
<dbReference type="GO" id="GO:0000122">
    <property type="term" value="P:negative regulation of transcription by RNA polymerase II"/>
    <property type="evidence" value="ECO:0000250"/>
    <property type="project" value="UniProtKB"/>
</dbReference>
<dbReference type="GO" id="GO:0030182">
    <property type="term" value="P:neuron differentiation"/>
    <property type="evidence" value="ECO:0000315"/>
    <property type="project" value="DFLAT"/>
</dbReference>
<dbReference type="GO" id="GO:0008284">
    <property type="term" value="P:positive regulation of cell population proliferation"/>
    <property type="evidence" value="ECO:0000316"/>
    <property type="project" value="MGI"/>
</dbReference>
<dbReference type="GO" id="GO:0043388">
    <property type="term" value="P:positive regulation of DNA binding"/>
    <property type="evidence" value="ECO:0000250"/>
    <property type="project" value="UniProtKB"/>
</dbReference>
<dbReference type="GO" id="GO:0006468">
    <property type="term" value="P:protein phosphorylation"/>
    <property type="evidence" value="ECO:0000250"/>
    <property type="project" value="UniProtKB"/>
</dbReference>
<dbReference type="GO" id="GO:0010803">
    <property type="term" value="P:regulation of tumor necrosis factor-mediated signaling pathway"/>
    <property type="evidence" value="ECO:0007669"/>
    <property type="project" value="Ensembl"/>
</dbReference>
<dbReference type="GO" id="GO:0010842">
    <property type="term" value="P:retina layer formation"/>
    <property type="evidence" value="ECO:0000315"/>
    <property type="project" value="DFLAT"/>
</dbReference>
<dbReference type="GO" id="GO:0007224">
    <property type="term" value="P:smoothened signaling pathway"/>
    <property type="evidence" value="ECO:0000316"/>
    <property type="project" value="MGI"/>
</dbReference>
<dbReference type="CDD" id="cd14228">
    <property type="entry name" value="STKc_HIPK1"/>
    <property type="match status" value="1"/>
</dbReference>
<dbReference type="FunFam" id="1.10.510.10:FF:000029">
    <property type="entry name" value="Homeodomain-interacting protein kinase 2 isoform 1"/>
    <property type="match status" value="1"/>
</dbReference>
<dbReference type="FunFam" id="3.30.200.20:FF:000022">
    <property type="entry name" value="Homeodomain-interacting protein kinase 2 isoform 1"/>
    <property type="match status" value="1"/>
</dbReference>
<dbReference type="Gene3D" id="3.30.200.20">
    <property type="entry name" value="Phosphorylase Kinase, domain 1"/>
    <property type="match status" value="1"/>
</dbReference>
<dbReference type="Gene3D" id="1.10.510.10">
    <property type="entry name" value="Transferase(Phosphotransferase) domain 1"/>
    <property type="match status" value="1"/>
</dbReference>
<dbReference type="InterPro" id="IPR011009">
    <property type="entry name" value="Kinase-like_dom_sf"/>
</dbReference>
<dbReference type="InterPro" id="IPR000719">
    <property type="entry name" value="Prot_kinase_dom"/>
</dbReference>
<dbReference type="InterPro" id="IPR017441">
    <property type="entry name" value="Protein_kinase_ATP_BS"/>
</dbReference>
<dbReference type="InterPro" id="IPR008271">
    <property type="entry name" value="Ser/Thr_kinase_AS"/>
</dbReference>
<dbReference type="InterPro" id="IPR050494">
    <property type="entry name" value="Ser_Thr_dual-spec_kinase"/>
</dbReference>
<dbReference type="PANTHER" id="PTHR24058">
    <property type="entry name" value="DUAL SPECIFICITY PROTEIN KINASE"/>
    <property type="match status" value="1"/>
</dbReference>
<dbReference type="PANTHER" id="PTHR24058:SF43">
    <property type="entry name" value="HOMEODOMAIN-INTERACTING PROTEIN KINASE 1"/>
    <property type="match status" value="1"/>
</dbReference>
<dbReference type="Pfam" id="PF00069">
    <property type="entry name" value="Pkinase"/>
    <property type="match status" value="1"/>
</dbReference>
<dbReference type="SMART" id="SM00220">
    <property type="entry name" value="S_TKc"/>
    <property type="match status" value="1"/>
</dbReference>
<dbReference type="SUPFAM" id="SSF56112">
    <property type="entry name" value="Protein kinase-like (PK-like)"/>
    <property type="match status" value="1"/>
</dbReference>
<dbReference type="PROSITE" id="PS00107">
    <property type="entry name" value="PROTEIN_KINASE_ATP"/>
    <property type="match status" value="1"/>
</dbReference>
<dbReference type="PROSITE" id="PS50011">
    <property type="entry name" value="PROTEIN_KINASE_DOM"/>
    <property type="match status" value="1"/>
</dbReference>
<dbReference type="PROSITE" id="PS00108">
    <property type="entry name" value="PROTEIN_KINASE_ST"/>
    <property type="match status" value="1"/>
</dbReference>
<comment type="function">
    <text evidence="2 7 8 10 11">Serine/threonine-protein kinase involved in transcription regulation and TNF-mediated cellular apoptosis. Plays a role as a corepressor for homeodomain transcription factors. Phosphorylates DAXX and MYB. Phosphorylates DAXX in response to stress, and mediates its translocation from the nucleus to the cytoplasm. Inactivates MYB transcription factor activity by phosphorylation. Prevents MAP3K5-JNK activation in the absence of TNF. TNF triggers its translocation to the cytoplasm in response to stress stimuli, thus activating nuclear MAP3K5-JNK by derepression and promoting apoptosis. May be involved in anti-oxidative stress responses. Involved in the regulation of eye size, lens formation and retinal lamination during late embryogenesis. Promotes angiogenesis and to be involved in erythroid differentiation. May be involved in malignant squamous cell tumor formation. Phosphorylates PAGE4 at 'Thr-51' which is critical for the ability of PAGE4 to potentiate the transcriptional activator activity of JUN (By similarity).</text>
</comment>
<comment type="catalytic activity">
    <reaction>
        <text>L-seryl-[protein] + ATP = O-phospho-L-seryl-[protein] + ADP + H(+)</text>
        <dbReference type="Rhea" id="RHEA:17989"/>
        <dbReference type="Rhea" id="RHEA-COMP:9863"/>
        <dbReference type="Rhea" id="RHEA-COMP:11604"/>
        <dbReference type="ChEBI" id="CHEBI:15378"/>
        <dbReference type="ChEBI" id="CHEBI:29999"/>
        <dbReference type="ChEBI" id="CHEBI:30616"/>
        <dbReference type="ChEBI" id="CHEBI:83421"/>
        <dbReference type="ChEBI" id="CHEBI:456216"/>
        <dbReference type="EC" id="2.7.11.1"/>
    </reaction>
</comment>
<comment type="catalytic activity">
    <reaction>
        <text>L-threonyl-[protein] + ATP = O-phospho-L-threonyl-[protein] + ADP + H(+)</text>
        <dbReference type="Rhea" id="RHEA:46608"/>
        <dbReference type="Rhea" id="RHEA-COMP:11060"/>
        <dbReference type="Rhea" id="RHEA-COMP:11605"/>
        <dbReference type="ChEBI" id="CHEBI:15378"/>
        <dbReference type="ChEBI" id="CHEBI:30013"/>
        <dbReference type="ChEBI" id="CHEBI:30616"/>
        <dbReference type="ChEBI" id="CHEBI:61977"/>
        <dbReference type="ChEBI" id="CHEBI:456216"/>
        <dbReference type="EC" id="2.7.11.1"/>
    </reaction>
</comment>
<comment type="subunit">
    <text evidence="6 7 12">Interacts with Nkx1-2, Nkx2-5, MYB, PARK7, DAXX and p53/TP53. Part of a cytoplasmic complex made of HIPK1, DAB2IP and MAP3K5 in response to TNF. This complex formation promotes MAP3K5-JNK activation and subsequent apoptosis.</text>
</comment>
<comment type="interaction">
    <interactant intactId="EBI-692945">
        <id>O88904</id>
    </interactant>
    <interactant intactId="EBI-77304">
        <id>O35613</id>
        <label>Daxx</label>
    </interactant>
    <organismsDiffer>false</organismsDiffer>
    <experiments>3</experiments>
</comment>
<comment type="interaction">
    <interactant intactId="EBI-692945">
        <id>O88904</id>
    </interactant>
    <interactant intactId="EBI-641788">
        <id>P23804</id>
        <label>Mdm2</label>
    </interactant>
    <organismsDiffer>false</organismsDiffer>
    <experiments>3</experiments>
</comment>
<comment type="interaction">
    <interactant intactId="EBI-692945">
        <id>O88904</id>
    </interactant>
    <interactant intactId="EBI-960530">
        <id>Q5EBH1</id>
        <label>Rassf5</label>
    </interactant>
    <organismsDiffer>false</organismsDiffer>
    <experiments>5</experiments>
</comment>
<comment type="interaction">
    <interactant intactId="EBI-692945">
        <id>O88904</id>
    </interactant>
    <interactant intactId="EBI-77321">
        <id>Q9UER7</id>
        <label>DAXX</label>
    </interactant>
    <organismsDiffer>true</organismsDiffer>
    <experiments>3</experiments>
</comment>
<comment type="subcellular location">
    <subcellularLocation>
        <location evidence="6 9 11">Nucleus</location>
    </subcellularLocation>
    <subcellularLocation>
        <location evidence="6 9 11">Cytoplasm</location>
    </subcellularLocation>
    <subcellularLocation>
        <location evidence="6">Nucleus speckle</location>
    </subcellularLocation>
    <text evidence="9">Predominantly nuclear. Translocates from nucleus to cytoplasm in response to stress stimuli via SENP1-mediated desumoylation.</text>
</comment>
<comment type="alternative products">
    <event type="alternative splicing"/>
    <isoform>
        <id>O88904-1</id>
        <name>1</name>
        <name>2b</name>
        <name>Myak-L</name>
        <sequence type="displayed"/>
    </isoform>
    <isoform>
        <id>O88904-2</id>
        <name>2</name>
        <name>2a</name>
        <sequence type="described" ref="VSP_013133"/>
    </isoform>
    <isoform>
        <id>O88904-3</id>
        <name>3</name>
        <name>Myak-S</name>
        <sequence type="described" ref="VSP_013132 VSP_013134"/>
    </isoform>
</comment>
<comment type="tissue specificity">
    <text evidence="5 6">Ubiquitously expressed, with high levels in reproductive tissues. Expressed in the epithelial layer of mammary gland, uterus and epididymis, in the corpus luteum, and in post-meiotic round spermatids.</text>
</comment>
<comment type="developmental stage">
    <text evidence="5 10 11">Highest at 12 dpc, where it is expressed primarily in the central nervous system. Highly induced during primary fetal liver erythropoiesis. Expressed in the inner retina during late embryogenesis, predominantly in cytoplasm.</text>
</comment>
<comment type="PTM">
    <text evidence="1">Phosphorylated and activated by JNK1 (By similarity). Autophosphorylated.</text>
</comment>
<comment type="PTM">
    <text evidence="9">Sumoylated. When conjugated it is directed to nuclear speckles. SENP1-mediated desumoylation is mediated by TNF in response to stress stimuli, triggering transient translocation from nucleus to cytoplasm.</text>
</comment>
<comment type="disruption phenotype">
    <text evidence="11">Small eyes with deficient lens, abnormal retinal lamination, and thickened retinas.</text>
</comment>
<comment type="miscellaneous">
    <molecule>Isoform 3</molecule>
    <text evidence="15">May be produced at very low levels due to a premature stop codon in the mRNA, leading to nonsense-mediated mRNA decay.</text>
</comment>
<comment type="similarity">
    <text evidence="15">Belongs to the protein kinase superfamily. CMGC Ser/Thr protein kinase family. HIPK subfamily.</text>
</comment>
<protein>
    <recommendedName>
        <fullName>Homeodomain-interacting protein kinase 1</fullName>
        <ecNumber>2.7.11.1</ecNumber>
    </recommendedName>
    <alternativeName>
        <fullName>Nuclear body-associated kinase 2</fullName>
    </alternativeName>
    <alternativeName>
        <fullName>Protein kinase Myak</fullName>
    </alternativeName>
</protein>
<feature type="chain" id="PRO_0000085994" description="Homeodomain-interacting protein kinase 1">
    <location>
        <begin position="1"/>
        <end position="1210"/>
    </location>
</feature>
<feature type="domain" description="Protein kinase" evidence="3">
    <location>
        <begin position="190"/>
        <end position="518"/>
    </location>
</feature>
<feature type="region of interest" description="Disordered" evidence="4">
    <location>
        <begin position="835"/>
        <end position="856"/>
    </location>
</feature>
<feature type="region of interest" description="Interaction with TP53" evidence="7">
    <location>
        <begin position="885"/>
        <end position="1093"/>
    </location>
</feature>
<feature type="region of interest" description="Required for localization to nuclear speckles" evidence="1">
    <location>
        <begin position="891"/>
        <end position="998"/>
    </location>
</feature>
<feature type="region of interest" description="SUMO interaction motifs (SIM); required for nuclear localization and kinase activity" evidence="1">
    <location>
        <begin position="902"/>
        <end position="926"/>
    </location>
</feature>
<feature type="region of interest" description="Disordered" evidence="4">
    <location>
        <begin position="938"/>
        <end position="981"/>
    </location>
</feature>
<feature type="region of interest" description="Disordered" evidence="4">
    <location>
        <begin position="1046"/>
        <end position="1069"/>
    </location>
</feature>
<feature type="region of interest" description="Disordered" evidence="4">
    <location>
        <begin position="1084"/>
        <end position="1104"/>
    </location>
</feature>
<feature type="short sequence motif" description="Nuclear localization signal 1 (NLS1)" evidence="1">
    <location>
        <begin position="844"/>
        <end position="847"/>
    </location>
</feature>
<feature type="compositionally biased region" description="Low complexity" evidence="4">
    <location>
        <begin position="941"/>
        <end position="959"/>
    </location>
</feature>
<feature type="compositionally biased region" description="Low complexity" evidence="4">
    <location>
        <begin position="1047"/>
        <end position="1063"/>
    </location>
</feature>
<feature type="compositionally biased region" description="Low complexity" evidence="4">
    <location>
        <begin position="1095"/>
        <end position="1104"/>
    </location>
</feature>
<feature type="active site" description="Proton acceptor" evidence="15">
    <location>
        <position position="315"/>
    </location>
</feature>
<feature type="binding site" evidence="15">
    <location>
        <begin position="196"/>
        <end position="204"/>
    </location>
    <ligand>
        <name>ATP</name>
        <dbReference type="ChEBI" id="CHEBI:30616"/>
    </ligand>
</feature>
<feature type="binding site" evidence="15">
    <location>
        <position position="219"/>
    </location>
    <ligand>
        <name>ATP</name>
        <dbReference type="ChEBI" id="CHEBI:30616"/>
    </ligand>
</feature>
<feature type="modified residue" description="Phosphoserine" evidence="2">
    <location>
        <position position="872"/>
    </location>
</feature>
<feature type="modified residue" description="Phosphoserine" evidence="2">
    <location>
        <position position="1200"/>
    </location>
</feature>
<feature type="cross-link" description="Glycyl lysine isopeptide (Lys-Gly) (interchain with G-Cter in SUMO); alternate" evidence="1">
    <location>
        <position position="25"/>
    </location>
</feature>
<feature type="cross-link" description="Glycyl lysine isopeptide (Lys-Gly) (interchain with G-Cter in SUMO2); alternate" evidence="2">
    <location>
        <position position="25"/>
    </location>
</feature>
<feature type="cross-link" description="Glycyl lysine isopeptide (Lys-Gly) (interchain with G-Cter in SUMO2)" evidence="2">
    <location>
        <position position="120"/>
    </location>
</feature>
<feature type="cross-link" description="Glycyl lysine isopeptide (Lys-Gly) (interchain with G-Cter in SUMO2)" evidence="2">
    <location>
        <position position="124"/>
    </location>
</feature>
<feature type="cross-link" description="Glycyl lysine isopeptide (Lys-Gly) (interchain with G-Cter in SUMO2)" evidence="2">
    <location>
        <position position="991"/>
    </location>
</feature>
<feature type="cross-link" description="Glycyl lysine isopeptide (Lys-Gly) (interchain with G-Cter in SUMO)" evidence="1">
    <location>
        <position position="1203"/>
    </location>
</feature>
<feature type="splice variant" id="VSP_013132" description="In isoform 3." evidence="13">
    <original>TGLQATTKHSGFPVRMDNAVPIVPQAPAAQPLQIQSGVLTQGSCTPLMVATLHPQVATI</original>
    <variation>KSEQAEGNEGLGETESSPGGQESGSGVSQGETTGGAQEQIHNPWTTSNNKAFWIPCEDG</variation>
    <location>
        <begin position="661"/>
        <end position="719"/>
    </location>
</feature>
<feature type="splice variant" id="VSP_013133" description="In isoform 2." evidence="14">
    <location>
        <begin position="702"/>
        <end position="746"/>
    </location>
</feature>
<feature type="splice variant" id="VSP_013134" description="In isoform 3." evidence="13">
    <location>
        <begin position="720"/>
        <end position="1209"/>
    </location>
</feature>
<feature type="mutagenesis site" description="Abolishes enzymatic activity." evidence="6">
    <original>K</original>
    <variation>A</variation>
    <location>
        <position position="219"/>
    </location>
</feature>
<feature type="sequence conflict" description="In Ref. 1; AAC63010." evidence="15" ref="1">
    <location>
        <position position="732"/>
    </location>
</feature>
<feature type="sequence conflict" description="In Ref. 1; AAC63010." evidence="15" ref="1">
    <original>K</original>
    <variation>E</variation>
    <location>
        <position position="921"/>
    </location>
</feature>
<feature type="sequence conflict" description="In Ref. 5; BAC65615." evidence="15" ref="5">
    <original>H</original>
    <variation>Y</variation>
    <location>
        <position position="953"/>
    </location>
</feature>
<feature type="sequence conflict" description="In Ref. 1; AAC63010 and 5; BAC65615." evidence="15" ref="1 5">
    <original>P</original>
    <variation>S</variation>
    <location>
        <position position="954"/>
    </location>
</feature>
<feature type="sequence conflict" description="In Ref. 1; AAC63010." evidence="15" ref="1">
    <original>S</original>
    <variation>F</variation>
    <location>
        <position position="1134"/>
    </location>
</feature>
<name>HIPK1_MOUSE</name>
<accession>O88904</accession>
<accession>A6H5Z7</accession>
<accession>Q80TV5</accession>
<accession>Q9QUQ8</accession>
<accession>Q9QZR3</accession>
<accession>Q9WVN7</accession>